<reference key="1">
    <citation type="journal article" date="2003" name="Nat. Genet.">
        <title>Comparative analysis of the genome sequences of Bordetella pertussis, Bordetella parapertussis and Bordetella bronchiseptica.</title>
        <authorList>
            <person name="Parkhill J."/>
            <person name="Sebaihia M."/>
            <person name="Preston A."/>
            <person name="Murphy L.D."/>
            <person name="Thomson N.R."/>
            <person name="Harris D.E."/>
            <person name="Holden M.T.G."/>
            <person name="Churcher C.M."/>
            <person name="Bentley S.D."/>
            <person name="Mungall K.L."/>
            <person name="Cerdeno-Tarraga A.-M."/>
            <person name="Temple L."/>
            <person name="James K.D."/>
            <person name="Harris B."/>
            <person name="Quail M.A."/>
            <person name="Achtman M."/>
            <person name="Atkin R."/>
            <person name="Baker S."/>
            <person name="Basham D."/>
            <person name="Bason N."/>
            <person name="Cherevach I."/>
            <person name="Chillingworth T."/>
            <person name="Collins M."/>
            <person name="Cronin A."/>
            <person name="Davis P."/>
            <person name="Doggett J."/>
            <person name="Feltwell T."/>
            <person name="Goble A."/>
            <person name="Hamlin N."/>
            <person name="Hauser H."/>
            <person name="Holroyd S."/>
            <person name="Jagels K."/>
            <person name="Leather S."/>
            <person name="Moule S."/>
            <person name="Norberczak H."/>
            <person name="O'Neil S."/>
            <person name="Ormond D."/>
            <person name="Price C."/>
            <person name="Rabbinowitsch E."/>
            <person name="Rutter S."/>
            <person name="Sanders M."/>
            <person name="Saunders D."/>
            <person name="Seeger K."/>
            <person name="Sharp S."/>
            <person name="Simmonds M."/>
            <person name="Skelton J."/>
            <person name="Squares R."/>
            <person name="Squares S."/>
            <person name="Stevens K."/>
            <person name="Unwin L."/>
            <person name="Whitehead S."/>
            <person name="Barrell B.G."/>
            <person name="Maskell D.J."/>
        </authorList>
    </citation>
    <scope>NUCLEOTIDE SEQUENCE [LARGE SCALE GENOMIC DNA]</scope>
    <source>
        <strain>Tohama I / ATCC BAA-589 / NCTC 13251</strain>
    </source>
</reference>
<accession>Q7VTD7</accession>
<comment type="function">
    <text evidence="2">With S4 and S5 plays an important role in translational accuracy.</text>
</comment>
<comment type="function">
    <text evidence="2">Interacts with and stabilizes bases of the 16S rRNA that are involved in tRNA selection in the A site and with the mRNA backbone. Located at the interface of the 30S and 50S subunits, it traverses the body of the 30S subunit contacting proteins on the other side and probably holding the rRNA structure together. The combined cluster of proteins S8, S12 and S17 appears to hold together the shoulder and platform of the 30S subunit.</text>
</comment>
<comment type="subunit">
    <text evidence="2">Part of the 30S ribosomal subunit. Contacts proteins S8 and S17. May interact with IF1 in the 30S initiation complex.</text>
</comment>
<comment type="similarity">
    <text evidence="2">Belongs to the universal ribosomal protein uS12 family.</text>
</comment>
<evidence type="ECO:0000250" key="1"/>
<evidence type="ECO:0000255" key="2">
    <source>
        <dbReference type="HAMAP-Rule" id="MF_00403"/>
    </source>
</evidence>
<evidence type="ECO:0000305" key="3"/>
<keyword id="KW-0488">Methylation</keyword>
<keyword id="KW-1185">Reference proteome</keyword>
<keyword id="KW-0687">Ribonucleoprotein</keyword>
<keyword id="KW-0689">Ribosomal protein</keyword>
<keyword id="KW-0694">RNA-binding</keyword>
<keyword id="KW-0699">rRNA-binding</keyword>
<keyword id="KW-0820">tRNA-binding</keyword>
<sequence length="125" mass="13958">MPTISQLVRKPREVSIIKSKSPALENCPQRRGVCTRVYTTTPKKPNSALRKVAKVRLTNGYEVISYIGGEGHNLQEHSVVLVRGGRVKDLPGVRYHIVRGSLDLQGVKDRKQARSKYGAKRPKKA</sequence>
<feature type="chain" id="PRO_0000146188" description="Small ribosomal subunit protein uS12">
    <location>
        <begin position="1"/>
        <end position="125"/>
    </location>
</feature>
<feature type="modified residue" description="3-methylthioaspartic acid" evidence="1">
    <location>
        <position position="89"/>
    </location>
</feature>
<gene>
    <name evidence="2" type="primary">rpsL</name>
    <name type="ordered locus">BP3608</name>
</gene>
<name>RS12_BORPE</name>
<proteinExistence type="inferred from homology"/>
<organism>
    <name type="scientific">Bordetella pertussis (strain Tohama I / ATCC BAA-589 / NCTC 13251)</name>
    <dbReference type="NCBI Taxonomy" id="257313"/>
    <lineage>
        <taxon>Bacteria</taxon>
        <taxon>Pseudomonadati</taxon>
        <taxon>Pseudomonadota</taxon>
        <taxon>Betaproteobacteria</taxon>
        <taxon>Burkholderiales</taxon>
        <taxon>Alcaligenaceae</taxon>
        <taxon>Bordetella</taxon>
    </lineage>
</organism>
<protein>
    <recommendedName>
        <fullName evidence="2">Small ribosomal subunit protein uS12</fullName>
    </recommendedName>
    <alternativeName>
        <fullName evidence="3">30S ribosomal protein S12</fullName>
    </alternativeName>
</protein>
<dbReference type="EMBL" id="BX640421">
    <property type="protein sequence ID" value="CAE43866.1"/>
    <property type="molecule type" value="Genomic_DNA"/>
</dbReference>
<dbReference type="RefSeq" id="NP_882118.1">
    <property type="nucleotide sequence ID" value="NC_002929.2"/>
</dbReference>
<dbReference type="RefSeq" id="WP_005017264.1">
    <property type="nucleotide sequence ID" value="NZ_CP039022.1"/>
</dbReference>
<dbReference type="SMR" id="Q7VTD7"/>
<dbReference type="STRING" id="257313.BP3608"/>
<dbReference type="PaxDb" id="257313-BP3608"/>
<dbReference type="GeneID" id="94357751"/>
<dbReference type="KEGG" id="bpe:BP3608"/>
<dbReference type="PATRIC" id="fig|257313.5.peg.3906"/>
<dbReference type="eggNOG" id="COG0048">
    <property type="taxonomic scope" value="Bacteria"/>
</dbReference>
<dbReference type="HOGENOM" id="CLU_104295_1_2_4"/>
<dbReference type="PRO" id="PR:Q7VTD7"/>
<dbReference type="Proteomes" id="UP000002676">
    <property type="component" value="Chromosome"/>
</dbReference>
<dbReference type="GO" id="GO:0015935">
    <property type="term" value="C:small ribosomal subunit"/>
    <property type="evidence" value="ECO:0007669"/>
    <property type="project" value="InterPro"/>
</dbReference>
<dbReference type="GO" id="GO:0019843">
    <property type="term" value="F:rRNA binding"/>
    <property type="evidence" value="ECO:0007669"/>
    <property type="project" value="UniProtKB-UniRule"/>
</dbReference>
<dbReference type="GO" id="GO:0003735">
    <property type="term" value="F:structural constituent of ribosome"/>
    <property type="evidence" value="ECO:0007669"/>
    <property type="project" value="InterPro"/>
</dbReference>
<dbReference type="GO" id="GO:0000049">
    <property type="term" value="F:tRNA binding"/>
    <property type="evidence" value="ECO:0007669"/>
    <property type="project" value="UniProtKB-UniRule"/>
</dbReference>
<dbReference type="GO" id="GO:0006412">
    <property type="term" value="P:translation"/>
    <property type="evidence" value="ECO:0007669"/>
    <property type="project" value="UniProtKB-UniRule"/>
</dbReference>
<dbReference type="CDD" id="cd03368">
    <property type="entry name" value="Ribosomal_S12"/>
    <property type="match status" value="1"/>
</dbReference>
<dbReference type="FunFam" id="2.40.50.140:FF:000001">
    <property type="entry name" value="30S ribosomal protein S12"/>
    <property type="match status" value="1"/>
</dbReference>
<dbReference type="Gene3D" id="2.40.50.140">
    <property type="entry name" value="Nucleic acid-binding proteins"/>
    <property type="match status" value="1"/>
</dbReference>
<dbReference type="HAMAP" id="MF_00403_B">
    <property type="entry name" value="Ribosomal_uS12_B"/>
    <property type="match status" value="1"/>
</dbReference>
<dbReference type="InterPro" id="IPR012340">
    <property type="entry name" value="NA-bd_OB-fold"/>
</dbReference>
<dbReference type="InterPro" id="IPR006032">
    <property type="entry name" value="Ribosomal_uS12"/>
</dbReference>
<dbReference type="InterPro" id="IPR005679">
    <property type="entry name" value="Ribosomal_uS12_bac"/>
</dbReference>
<dbReference type="NCBIfam" id="TIGR00981">
    <property type="entry name" value="rpsL_bact"/>
    <property type="match status" value="1"/>
</dbReference>
<dbReference type="PANTHER" id="PTHR11652">
    <property type="entry name" value="30S RIBOSOMAL PROTEIN S12 FAMILY MEMBER"/>
    <property type="match status" value="1"/>
</dbReference>
<dbReference type="Pfam" id="PF00164">
    <property type="entry name" value="Ribosom_S12_S23"/>
    <property type="match status" value="1"/>
</dbReference>
<dbReference type="PIRSF" id="PIRSF002133">
    <property type="entry name" value="Ribosomal_S12/S23"/>
    <property type="match status" value="1"/>
</dbReference>
<dbReference type="PRINTS" id="PR01034">
    <property type="entry name" value="RIBOSOMALS12"/>
</dbReference>
<dbReference type="SUPFAM" id="SSF50249">
    <property type="entry name" value="Nucleic acid-binding proteins"/>
    <property type="match status" value="1"/>
</dbReference>
<dbReference type="PROSITE" id="PS00055">
    <property type="entry name" value="RIBOSOMAL_S12"/>
    <property type="match status" value="1"/>
</dbReference>